<sequence length="367" mass="39153">MSDSQTLVVKLGTSVLTGGSRRLNRAHIVELVRQCAQLHAAGHRIVIVTSGAIAAGREHLGYPELPATIASKQLLAAVGQSRLIQLWEQLFSIYGIHIGQMLLTRADMEDRERFLNARDTLRALLDNHIVPVINENDAVATAEIKVGDNDNLSALAAILAGADKLLLLTDQQGLFTADPRSNPQAELIKDVYGVDDALRSIAGDSVSGLGIGGMSTKLQAADVACRAGIDTIIASGSKPGVIGDVMEGISVGTRFHAQASPLENRKRWIFGAPPAGEITVDEGATAAMLERGSSLLPKGIKSVTGNFSRGEVIRICNLQGRDIAHGVSRYNSDALRRIAGHHSQQIDAILGYEYGPVAVHRDDMITR</sequence>
<feature type="chain" id="PRO_1000081103" description="Glutamate 5-kinase">
    <location>
        <begin position="1"/>
        <end position="367"/>
    </location>
</feature>
<feature type="domain" description="PUA" evidence="1">
    <location>
        <begin position="275"/>
        <end position="353"/>
    </location>
</feature>
<feature type="binding site" evidence="1">
    <location>
        <position position="10"/>
    </location>
    <ligand>
        <name>ATP</name>
        <dbReference type="ChEBI" id="CHEBI:30616"/>
    </ligand>
</feature>
<feature type="binding site" evidence="1">
    <location>
        <position position="50"/>
    </location>
    <ligand>
        <name>substrate</name>
    </ligand>
</feature>
<feature type="binding site" evidence="1">
    <location>
        <position position="137"/>
    </location>
    <ligand>
        <name>substrate</name>
    </ligand>
</feature>
<feature type="binding site" evidence="1">
    <location>
        <position position="149"/>
    </location>
    <ligand>
        <name>substrate</name>
    </ligand>
</feature>
<feature type="binding site" evidence="1">
    <location>
        <begin position="169"/>
        <end position="170"/>
    </location>
    <ligand>
        <name>ATP</name>
        <dbReference type="ChEBI" id="CHEBI:30616"/>
    </ligand>
</feature>
<evidence type="ECO:0000255" key="1">
    <source>
        <dbReference type="HAMAP-Rule" id="MF_00456"/>
    </source>
</evidence>
<reference key="1">
    <citation type="submission" date="2007-11" db="EMBL/GenBank/DDBJ databases">
        <authorList>
            <consortium name="The Salmonella enterica serovar Paratyphi B Genome Sequencing Project"/>
            <person name="McClelland M."/>
            <person name="Sanderson E.K."/>
            <person name="Porwollik S."/>
            <person name="Spieth J."/>
            <person name="Clifton W.S."/>
            <person name="Fulton R."/>
            <person name="Cordes M."/>
            <person name="Wollam A."/>
            <person name="Shah N."/>
            <person name="Pepin K."/>
            <person name="Bhonagiri V."/>
            <person name="Nash W."/>
            <person name="Johnson M."/>
            <person name="Thiruvilangam P."/>
            <person name="Wilson R."/>
        </authorList>
    </citation>
    <scope>NUCLEOTIDE SEQUENCE [LARGE SCALE GENOMIC DNA]</scope>
    <source>
        <strain>ATCC BAA-1250 / SPB7</strain>
    </source>
</reference>
<keyword id="KW-0028">Amino-acid biosynthesis</keyword>
<keyword id="KW-0067">ATP-binding</keyword>
<keyword id="KW-0963">Cytoplasm</keyword>
<keyword id="KW-0418">Kinase</keyword>
<keyword id="KW-0547">Nucleotide-binding</keyword>
<keyword id="KW-0641">Proline biosynthesis</keyword>
<keyword id="KW-0808">Transferase</keyword>
<protein>
    <recommendedName>
        <fullName evidence="1">Glutamate 5-kinase</fullName>
        <ecNumber evidence="1">2.7.2.11</ecNumber>
    </recommendedName>
    <alternativeName>
        <fullName evidence="1">Gamma-glutamyl kinase</fullName>
        <shortName evidence="1">GK</shortName>
    </alternativeName>
</protein>
<organism>
    <name type="scientific">Salmonella paratyphi B (strain ATCC BAA-1250 / SPB7)</name>
    <dbReference type="NCBI Taxonomy" id="1016998"/>
    <lineage>
        <taxon>Bacteria</taxon>
        <taxon>Pseudomonadati</taxon>
        <taxon>Pseudomonadota</taxon>
        <taxon>Gammaproteobacteria</taxon>
        <taxon>Enterobacterales</taxon>
        <taxon>Enterobacteriaceae</taxon>
        <taxon>Salmonella</taxon>
    </lineage>
</organism>
<accession>A9MY03</accession>
<dbReference type="EC" id="2.7.2.11" evidence="1"/>
<dbReference type="EMBL" id="CP000886">
    <property type="protein sequence ID" value="ABX68639.1"/>
    <property type="molecule type" value="Genomic_DNA"/>
</dbReference>
<dbReference type="RefSeq" id="WP_001285273.1">
    <property type="nucleotide sequence ID" value="NC_010102.1"/>
</dbReference>
<dbReference type="SMR" id="A9MY03"/>
<dbReference type="KEGG" id="spq:SPAB_03279"/>
<dbReference type="PATRIC" id="fig|1016998.12.peg.3097"/>
<dbReference type="HOGENOM" id="CLU_025400_2_0_6"/>
<dbReference type="BioCyc" id="SENT1016998:SPAB_RS13415-MONOMER"/>
<dbReference type="UniPathway" id="UPA00098">
    <property type="reaction ID" value="UER00359"/>
</dbReference>
<dbReference type="Proteomes" id="UP000008556">
    <property type="component" value="Chromosome"/>
</dbReference>
<dbReference type="GO" id="GO:0005829">
    <property type="term" value="C:cytosol"/>
    <property type="evidence" value="ECO:0007669"/>
    <property type="project" value="TreeGrafter"/>
</dbReference>
<dbReference type="GO" id="GO:0005524">
    <property type="term" value="F:ATP binding"/>
    <property type="evidence" value="ECO:0007669"/>
    <property type="project" value="UniProtKB-KW"/>
</dbReference>
<dbReference type="GO" id="GO:0004349">
    <property type="term" value="F:glutamate 5-kinase activity"/>
    <property type="evidence" value="ECO:0007669"/>
    <property type="project" value="UniProtKB-UniRule"/>
</dbReference>
<dbReference type="GO" id="GO:0003723">
    <property type="term" value="F:RNA binding"/>
    <property type="evidence" value="ECO:0007669"/>
    <property type="project" value="InterPro"/>
</dbReference>
<dbReference type="GO" id="GO:0055129">
    <property type="term" value="P:L-proline biosynthetic process"/>
    <property type="evidence" value="ECO:0007669"/>
    <property type="project" value="UniProtKB-UniRule"/>
</dbReference>
<dbReference type="CDD" id="cd04242">
    <property type="entry name" value="AAK_G5K_ProB"/>
    <property type="match status" value="1"/>
</dbReference>
<dbReference type="CDD" id="cd21157">
    <property type="entry name" value="PUA_G5K"/>
    <property type="match status" value="1"/>
</dbReference>
<dbReference type="FunFam" id="2.30.130.10:FF:000003">
    <property type="entry name" value="Glutamate 5-kinase"/>
    <property type="match status" value="1"/>
</dbReference>
<dbReference type="FunFam" id="3.40.1160.10:FF:000006">
    <property type="entry name" value="Glutamate 5-kinase"/>
    <property type="match status" value="1"/>
</dbReference>
<dbReference type="Gene3D" id="3.40.1160.10">
    <property type="entry name" value="Acetylglutamate kinase-like"/>
    <property type="match status" value="2"/>
</dbReference>
<dbReference type="Gene3D" id="2.30.130.10">
    <property type="entry name" value="PUA domain"/>
    <property type="match status" value="1"/>
</dbReference>
<dbReference type="HAMAP" id="MF_00456">
    <property type="entry name" value="ProB"/>
    <property type="match status" value="1"/>
</dbReference>
<dbReference type="InterPro" id="IPR036393">
    <property type="entry name" value="AceGlu_kinase-like_sf"/>
</dbReference>
<dbReference type="InterPro" id="IPR001048">
    <property type="entry name" value="Asp/Glu/Uridylate_kinase"/>
</dbReference>
<dbReference type="InterPro" id="IPR041739">
    <property type="entry name" value="G5K_ProB"/>
</dbReference>
<dbReference type="InterPro" id="IPR001057">
    <property type="entry name" value="Glu/AcGlu_kinase"/>
</dbReference>
<dbReference type="InterPro" id="IPR011529">
    <property type="entry name" value="Glu_5kinase"/>
</dbReference>
<dbReference type="InterPro" id="IPR005715">
    <property type="entry name" value="Glu_5kinase/COase_Synthase"/>
</dbReference>
<dbReference type="InterPro" id="IPR019797">
    <property type="entry name" value="Glutamate_5-kinase_CS"/>
</dbReference>
<dbReference type="InterPro" id="IPR002478">
    <property type="entry name" value="PUA"/>
</dbReference>
<dbReference type="InterPro" id="IPR015947">
    <property type="entry name" value="PUA-like_sf"/>
</dbReference>
<dbReference type="InterPro" id="IPR036974">
    <property type="entry name" value="PUA_sf"/>
</dbReference>
<dbReference type="NCBIfam" id="TIGR01027">
    <property type="entry name" value="proB"/>
    <property type="match status" value="1"/>
</dbReference>
<dbReference type="PANTHER" id="PTHR43654">
    <property type="entry name" value="GLUTAMATE 5-KINASE"/>
    <property type="match status" value="1"/>
</dbReference>
<dbReference type="PANTHER" id="PTHR43654:SF1">
    <property type="entry name" value="ISOPENTENYL PHOSPHATE KINASE"/>
    <property type="match status" value="1"/>
</dbReference>
<dbReference type="Pfam" id="PF00696">
    <property type="entry name" value="AA_kinase"/>
    <property type="match status" value="1"/>
</dbReference>
<dbReference type="Pfam" id="PF01472">
    <property type="entry name" value="PUA"/>
    <property type="match status" value="1"/>
</dbReference>
<dbReference type="PIRSF" id="PIRSF000729">
    <property type="entry name" value="GK"/>
    <property type="match status" value="1"/>
</dbReference>
<dbReference type="PRINTS" id="PR00474">
    <property type="entry name" value="GLU5KINASE"/>
</dbReference>
<dbReference type="SMART" id="SM00359">
    <property type="entry name" value="PUA"/>
    <property type="match status" value="1"/>
</dbReference>
<dbReference type="SUPFAM" id="SSF53633">
    <property type="entry name" value="Carbamate kinase-like"/>
    <property type="match status" value="1"/>
</dbReference>
<dbReference type="SUPFAM" id="SSF88697">
    <property type="entry name" value="PUA domain-like"/>
    <property type="match status" value="1"/>
</dbReference>
<dbReference type="PROSITE" id="PS00902">
    <property type="entry name" value="GLUTAMATE_5_KINASE"/>
    <property type="match status" value="1"/>
</dbReference>
<dbReference type="PROSITE" id="PS50890">
    <property type="entry name" value="PUA"/>
    <property type="match status" value="1"/>
</dbReference>
<proteinExistence type="inferred from homology"/>
<name>PROB_SALPB</name>
<gene>
    <name evidence="1" type="primary">proB</name>
    <name type="ordered locus">SPAB_03279</name>
</gene>
<comment type="function">
    <text evidence="1">Catalyzes the transfer of a phosphate group to glutamate to form L-glutamate 5-phosphate.</text>
</comment>
<comment type="catalytic activity">
    <reaction evidence="1">
        <text>L-glutamate + ATP = L-glutamyl 5-phosphate + ADP</text>
        <dbReference type="Rhea" id="RHEA:14877"/>
        <dbReference type="ChEBI" id="CHEBI:29985"/>
        <dbReference type="ChEBI" id="CHEBI:30616"/>
        <dbReference type="ChEBI" id="CHEBI:58274"/>
        <dbReference type="ChEBI" id="CHEBI:456216"/>
        <dbReference type="EC" id="2.7.2.11"/>
    </reaction>
</comment>
<comment type="pathway">
    <text evidence="1">Amino-acid biosynthesis; L-proline biosynthesis; L-glutamate 5-semialdehyde from L-glutamate: step 1/2.</text>
</comment>
<comment type="subcellular location">
    <subcellularLocation>
        <location evidence="1">Cytoplasm</location>
    </subcellularLocation>
</comment>
<comment type="similarity">
    <text evidence="1">Belongs to the glutamate 5-kinase family.</text>
</comment>